<sequence>MTDQTAASPRVLVTGGAGYIGSHVLHALTDAGIPAVTIDDLSAGRREAIPAAVPLVEGDIGSAELLDRVMRDHRVDAVMHFAGSIVVPESVVKPLDYYRNNTANSLTLLGACLRAGIDKVVFSSTAAVYGAPESVPIREDAPTVPINPYGASKLMTEQMLRDAGAAHGLRSVILRYFNVAGADPAGRTGQATPVATHLIKVACQALLGRRPPLAIFGTDYDTPDGTCIRDYIHVSDLADAHVLALLHLRRGGGSLLMNCGYGRGASVREVVRTLEEVSGEQVPATFADRRPGDPPQLVAGADRIREQLGWVPKHDRLDGIVRSALSWERSLEQSVGQAGAPGGSASRS</sequence>
<protein>
    <recommendedName>
        <fullName>UDP-glucose 4-epimerase</fullName>
        <ecNumber>5.1.3.2</ecNumber>
    </recommendedName>
    <alternativeName>
        <fullName>Galactowaldenase</fullName>
    </alternativeName>
    <alternativeName>
        <fullName>UDP-galactose 4-epimerase</fullName>
    </alternativeName>
</protein>
<name>EXOB_AZOBR</name>
<accession>Q59083</accession>
<proteinExistence type="inferred from homology"/>
<evidence type="ECO:0000250" key="1"/>
<evidence type="ECO:0000305" key="2"/>
<comment type="catalytic activity">
    <reaction>
        <text>UDP-alpha-D-glucose = UDP-alpha-D-galactose</text>
        <dbReference type="Rhea" id="RHEA:22168"/>
        <dbReference type="ChEBI" id="CHEBI:58885"/>
        <dbReference type="ChEBI" id="CHEBI:66914"/>
        <dbReference type="EC" id="5.1.3.2"/>
    </reaction>
</comment>
<comment type="cofactor">
    <cofactor>
        <name>NAD(+)</name>
        <dbReference type="ChEBI" id="CHEBI:57540"/>
    </cofactor>
</comment>
<comment type="pathway">
    <text>Carbohydrate metabolism; galactose metabolism.</text>
</comment>
<comment type="pathway">
    <text>Glycan metabolism; exopolysaccharide biosynthesis.</text>
</comment>
<comment type="similarity">
    <text evidence="2">Belongs to the NAD(P)-dependent epimerase/dehydratase family.</text>
</comment>
<gene>
    <name type="primary">exoB</name>
</gene>
<keyword id="KW-0119">Carbohydrate metabolism</keyword>
<keyword id="KW-0270">Exopolysaccharide synthesis</keyword>
<keyword id="KW-0299">Galactose metabolism</keyword>
<keyword id="KW-0413">Isomerase</keyword>
<keyword id="KW-0520">NAD</keyword>
<keyword id="KW-0614">Plasmid</keyword>
<dbReference type="EC" id="5.1.3.2"/>
<dbReference type="EMBL" id="Z25478">
    <property type="protein sequence ID" value="CAA80967.1"/>
    <property type="molecule type" value="Genomic_DNA"/>
</dbReference>
<dbReference type="PIR" id="I39490">
    <property type="entry name" value="I39490"/>
</dbReference>
<dbReference type="RefSeq" id="WP_059399823.1">
    <property type="nucleotide sequence ID" value="NZ_CP012919.1"/>
</dbReference>
<dbReference type="SMR" id="Q59083"/>
<dbReference type="GeneID" id="56449505"/>
<dbReference type="UniPathway" id="UPA00214"/>
<dbReference type="UniPathway" id="UPA00631"/>
<dbReference type="GO" id="GO:0003978">
    <property type="term" value="F:UDP-glucose 4-epimerase activity"/>
    <property type="evidence" value="ECO:0007669"/>
    <property type="project" value="UniProtKB-EC"/>
</dbReference>
<dbReference type="GO" id="GO:0033499">
    <property type="term" value="P:galactose catabolic process via UDP-galactose, Leloir pathway"/>
    <property type="evidence" value="ECO:0007669"/>
    <property type="project" value="TreeGrafter"/>
</dbReference>
<dbReference type="GO" id="GO:0000271">
    <property type="term" value="P:polysaccharide biosynthetic process"/>
    <property type="evidence" value="ECO:0007669"/>
    <property type="project" value="UniProtKB-KW"/>
</dbReference>
<dbReference type="CDD" id="cd05247">
    <property type="entry name" value="UDP_G4E_1_SDR_e"/>
    <property type="match status" value="1"/>
</dbReference>
<dbReference type="Gene3D" id="3.40.50.720">
    <property type="entry name" value="NAD(P)-binding Rossmann-like Domain"/>
    <property type="match status" value="1"/>
</dbReference>
<dbReference type="Gene3D" id="3.90.25.10">
    <property type="entry name" value="UDP-galactose 4-epimerase, domain 1"/>
    <property type="match status" value="1"/>
</dbReference>
<dbReference type="InterPro" id="IPR001509">
    <property type="entry name" value="Epimerase_deHydtase"/>
</dbReference>
<dbReference type="InterPro" id="IPR036291">
    <property type="entry name" value="NAD(P)-bd_dom_sf"/>
</dbReference>
<dbReference type="InterPro" id="IPR005886">
    <property type="entry name" value="UDP_G4E"/>
</dbReference>
<dbReference type="NCBIfam" id="TIGR01179">
    <property type="entry name" value="galE"/>
    <property type="match status" value="1"/>
</dbReference>
<dbReference type="PANTHER" id="PTHR43725:SF53">
    <property type="entry name" value="UDP-ARABINOSE 4-EPIMERASE 1"/>
    <property type="match status" value="1"/>
</dbReference>
<dbReference type="PANTHER" id="PTHR43725">
    <property type="entry name" value="UDP-GLUCOSE 4-EPIMERASE"/>
    <property type="match status" value="1"/>
</dbReference>
<dbReference type="Pfam" id="PF01370">
    <property type="entry name" value="Epimerase"/>
    <property type="match status" value="1"/>
</dbReference>
<dbReference type="SUPFAM" id="SSF51735">
    <property type="entry name" value="NAD(P)-binding Rossmann-fold domains"/>
    <property type="match status" value="1"/>
</dbReference>
<geneLocation type="plasmid">
    <name>pRhico</name>
    <name>90-MDa megaplasmid</name>
</geneLocation>
<organism>
    <name type="scientific">Azospirillum brasilense</name>
    <dbReference type="NCBI Taxonomy" id="192"/>
    <lineage>
        <taxon>Bacteria</taxon>
        <taxon>Pseudomonadati</taxon>
        <taxon>Pseudomonadota</taxon>
        <taxon>Alphaproteobacteria</taxon>
        <taxon>Rhodospirillales</taxon>
        <taxon>Azospirillaceae</taxon>
        <taxon>Azospirillum</taxon>
    </lineage>
</organism>
<feature type="chain" id="PRO_0000183226" description="UDP-glucose 4-epimerase">
    <location>
        <begin position="1"/>
        <end position="348"/>
    </location>
</feature>
<feature type="active site" description="Proton acceptor" evidence="1">
    <location>
        <position position="149"/>
    </location>
</feature>
<feature type="binding site" evidence="1">
    <location>
        <position position="125"/>
    </location>
    <ligand>
        <name>substrate</name>
    </ligand>
</feature>
<reference key="1">
    <citation type="journal article" date="1994" name="Gene">
        <title>Sequence analysis of the Azospirillum brasilense exoB gene, encoding UDP-glucose 4'-epimerase.</title>
        <authorList>
            <person name="de Troch P."/>
            <person name="Keijers V."/>
            <person name="Vanderleyden J."/>
        </authorList>
    </citation>
    <scope>NUCLEOTIDE SEQUENCE [GENOMIC DNA]</scope>
    <source>
        <strain>ATCC 29145 / DSM 1690 / IMET 11303 / Sp7</strain>
    </source>
</reference>